<protein>
    <recommendedName>
        <fullName evidence="1">Malate dehydrogenase</fullName>
        <ecNumber evidence="1">1.1.1.37</ecNumber>
    </recommendedName>
</protein>
<comment type="function">
    <text evidence="1">Catalyzes the reversible oxidation of malate to oxaloacetate.</text>
</comment>
<comment type="catalytic activity">
    <reaction evidence="1">
        <text>(S)-malate + NAD(+) = oxaloacetate + NADH + H(+)</text>
        <dbReference type="Rhea" id="RHEA:21432"/>
        <dbReference type="ChEBI" id="CHEBI:15378"/>
        <dbReference type="ChEBI" id="CHEBI:15589"/>
        <dbReference type="ChEBI" id="CHEBI:16452"/>
        <dbReference type="ChEBI" id="CHEBI:57540"/>
        <dbReference type="ChEBI" id="CHEBI:57945"/>
        <dbReference type="EC" id="1.1.1.37"/>
    </reaction>
</comment>
<comment type="similarity">
    <text evidence="1">Belongs to the LDH/MDH superfamily. MDH type 2 family.</text>
</comment>
<dbReference type="EC" id="1.1.1.37" evidence="1"/>
<dbReference type="EMBL" id="CP000967">
    <property type="protein sequence ID" value="ACD60831.1"/>
    <property type="molecule type" value="Genomic_DNA"/>
</dbReference>
<dbReference type="RefSeq" id="WP_012445978.1">
    <property type="nucleotide sequence ID" value="NC_010717.2"/>
</dbReference>
<dbReference type="SMR" id="B2SMP6"/>
<dbReference type="KEGG" id="xop:PXO_02545"/>
<dbReference type="eggNOG" id="COG0039">
    <property type="taxonomic scope" value="Bacteria"/>
</dbReference>
<dbReference type="HOGENOM" id="CLU_040727_2_0_6"/>
<dbReference type="Proteomes" id="UP000001740">
    <property type="component" value="Chromosome"/>
</dbReference>
<dbReference type="GO" id="GO:0030060">
    <property type="term" value="F:L-malate dehydrogenase (NAD+) activity"/>
    <property type="evidence" value="ECO:0007669"/>
    <property type="project" value="UniProtKB-UniRule"/>
</dbReference>
<dbReference type="GO" id="GO:0006108">
    <property type="term" value="P:malate metabolic process"/>
    <property type="evidence" value="ECO:0007669"/>
    <property type="project" value="InterPro"/>
</dbReference>
<dbReference type="GO" id="GO:0006099">
    <property type="term" value="P:tricarboxylic acid cycle"/>
    <property type="evidence" value="ECO:0007669"/>
    <property type="project" value="UniProtKB-UniRule"/>
</dbReference>
<dbReference type="CDD" id="cd01338">
    <property type="entry name" value="MDH_chloroplast-like"/>
    <property type="match status" value="1"/>
</dbReference>
<dbReference type="FunFam" id="3.40.50.720:FF:000010">
    <property type="entry name" value="Malate dehydrogenase"/>
    <property type="match status" value="1"/>
</dbReference>
<dbReference type="FunFam" id="3.90.110.10:FF:000002">
    <property type="entry name" value="Malate dehydrogenase"/>
    <property type="match status" value="1"/>
</dbReference>
<dbReference type="Gene3D" id="3.90.110.10">
    <property type="entry name" value="Lactate dehydrogenase/glycoside hydrolase, family 4, C-terminal"/>
    <property type="match status" value="1"/>
</dbReference>
<dbReference type="Gene3D" id="3.40.50.720">
    <property type="entry name" value="NAD(P)-binding Rossmann-like Domain"/>
    <property type="match status" value="1"/>
</dbReference>
<dbReference type="HAMAP" id="MF_01517">
    <property type="entry name" value="Malate_dehydrog_2"/>
    <property type="match status" value="1"/>
</dbReference>
<dbReference type="InterPro" id="IPR001557">
    <property type="entry name" value="L-lactate/malate_DH"/>
</dbReference>
<dbReference type="InterPro" id="IPR022383">
    <property type="entry name" value="Lactate/malate_DH_C"/>
</dbReference>
<dbReference type="InterPro" id="IPR001236">
    <property type="entry name" value="Lactate/malate_DH_N"/>
</dbReference>
<dbReference type="InterPro" id="IPR015955">
    <property type="entry name" value="Lactate_DH/Glyco_Ohase_4_C"/>
</dbReference>
<dbReference type="InterPro" id="IPR010945">
    <property type="entry name" value="Malate_DH_type2"/>
</dbReference>
<dbReference type="InterPro" id="IPR036291">
    <property type="entry name" value="NAD(P)-bd_dom_sf"/>
</dbReference>
<dbReference type="NCBIfam" id="TIGR01759">
    <property type="entry name" value="MalateDH-SF1"/>
    <property type="match status" value="1"/>
</dbReference>
<dbReference type="NCBIfam" id="NF003916">
    <property type="entry name" value="PRK05442.1"/>
    <property type="match status" value="1"/>
</dbReference>
<dbReference type="PANTHER" id="PTHR23382">
    <property type="entry name" value="MALATE DEHYDROGENASE"/>
    <property type="match status" value="1"/>
</dbReference>
<dbReference type="Pfam" id="PF02866">
    <property type="entry name" value="Ldh_1_C"/>
    <property type="match status" value="1"/>
</dbReference>
<dbReference type="Pfam" id="PF00056">
    <property type="entry name" value="Ldh_1_N"/>
    <property type="match status" value="1"/>
</dbReference>
<dbReference type="PIRSF" id="PIRSF000102">
    <property type="entry name" value="Lac_mal_DH"/>
    <property type="match status" value="1"/>
</dbReference>
<dbReference type="SUPFAM" id="SSF56327">
    <property type="entry name" value="LDH C-terminal domain-like"/>
    <property type="match status" value="1"/>
</dbReference>
<dbReference type="SUPFAM" id="SSF51735">
    <property type="entry name" value="NAD(P)-binding Rossmann-fold domains"/>
    <property type="match status" value="1"/>
</dbReference>
<sequence>MKAPVRVAVTGAAGQIGYALLFRIASGEMLGKDQPVILQLLELSNEKAQAALKGVMMELEDCAFPLLAGMVGTDDAEVAFKDIDVALLVGARPRGPGMERKDLLLENAKIFTAQGAALNKVAKRDVKVLVVGNPANTNAYIAMKSAPDLNPNNFTAMLRLDHNRALSQLALKLGKPVGGIEKLVVWGNHSPTMYPDYRFATSDGASIGDAINDQEWNASTFIPTVGKRGAAIIEARGLSSAASAANAAIDHVRDWVLGSNGKWVTMGVPSDGSYGISEGVIFGFPVTTENGQYSLVKDLPIDDFSQKYIDKTLAELEEERSGVSHLLG</sequence>
<feature type="chain" id="PRO_1000191633" description="Malate dehydrogenase">
    <location>
        <begin position="1"/>
        <end position="328"/>
    </location>
</feature>
<feature type="active site" description="Proton acceptor" evidence="1">
    <location>
        <position position="189"/>
    </location>
</feature>
<feature type="binding site" evidence="1">
    <location>
        <begin position="11"/>
        <end position="17"/>
    </location>
    <ligand>
        <name>NAD(+)</name>
        <dbReference type="ChEBI" id="CHEBI:57540"/>
    </ligand>
</feature>
<feature type="binding site" evidence="1">
    <location>
        <position position="94"/>
    </location>
    <ligand>
        <name>substrate</name>
    </ligand>
</feature>
<feature type="binding site" evidence="1">
    <location>
        <position position="100"/>
    </location>
    <ligand>
        <name>substrate</name>
    </ligand>
</feature>
<feature type="binding site" evidence="1">
    <location>
        <position position="107"/>
    </location>
    <ligand>
        <name>NAD(+)</name>
        <dbReference type="ChEBI" id="CHEBI:57540"/>
    </ligand>
</feature>
<feature type="binding site" evidence="1">
    <location>
        <position position="114"/>
    </location>
    <ligand>
        <name>NAD(+)</name>
        <dbReference type="ChEBI" id="CHEBI:57540"/>
    </ligand>
</feature>
<feature type="binding site" evidence="1">
    <location>
        <begin position="131"/>
        <end position="133"/>
    </location>
    <ligand>
        <name>NAD(+)</name>
        <dbReference type="ChEBI" id="CHEBI:57540"/>
    </ligand>
</feature>
<feature type="binding site" evidence="1">
    <location>
        <position position="133"/>
    </location>
    <ligand>
        <name>substrate</name>
    </ligand>
</feature>
<feature type="binding site" evidence="1">
    <location>
        <position position="164"/>
    </location>
    <ligand>
        <name>substrate</name>
    </ligand>
</feature>
<organism>
    <name type="scientific">Xanthomonas oryzae pv. oryzae (strain PXO99A)</name>
    <dbReference type="NCBI Taxonomy" id="360094"/>
    <lineage>
        <taxon>Bacteria</taxon>
        <taxon>Pseudomonadati</taxon>
        <taxon>Pseudomonadota</taxon>
        <taxon>Gammaproteobacteria</taxon>
        <taxon>Lysobacterales</taxon>
        <taxon>Lysobacteraceae</taxon>
        <taxon>Xanthomonas</taxon>
    </lineage>
</organism>
<name>MDH_XANOP</name>
<accession>B2SMP6</accession>
<proteinExistence type="inferred from homology"/>
<reference key="1">
    <citation type="journal article" date="2008" name="BMC Genomics">
        <title>Genome sequence and rapid evolution of the rice pathogen Xanthomonas oryzae pv. oryzae PXO99A.</title>
        <authorList>
            <person name="Salzberg S.L."/>
            <person name="Sommer D.D."/>
            <person name="Schatz M.C."/>
            <person name="Phillippy A.M."/>
            <person name="Rabinowicz P.D."/>
            <person name="Tsuge S."/>
            <person name="Furutani A."/>
            <person name="Ochiai H."/>
            <person name="Delcher A.L."/>
            <person name="Kelley D."/>
            <person name="Madupu R."/>
            <person name="Puiu D."/>
            <person name="Radune D."/>
            <person name="Shumway M."/>
            <person name="Trapnell C."/>
            <person name="Aparna G."/>
            <person name="Jha G."/>
            <person name="Pandey A."/>
            <person name="Patil P.B."/>
            <person name="Ishihara H."/>
            <person name="Meyer D.F."/>
            <person name="Szurek B."/>
            <person name="Verdier V."/>
            <person name="Koebnik R."/>
            <person name="Dow J.M."/>
            <person name="Ryan R.P."/>
            <person name="Hirata H."/>
            <person name="Tsuyumu S."/>
            <person name="Won Lee S."/>
            <person name="Seo Y.-S."/>
            <person name="Sriariyanum M."/>
            <person name="Ronald P.C."/>
            <person name="Sonti R.V."/>
            <person name="Van Sluys M.-A."/>
            <person name="Leach J.E."/>
            <person name="White F.F."/>
            <person name="Bogdanove A.J."/>
        </authorList>
    </citation>
    <scope>NUCLEOTIDE SEQUENCE [LARGE SCALE GENOMIC DNA]</scope>
    <source>
        <strain>PXO99A</strain>
    </source>
</reference>
<keyword id="KW-0520">NAD</keyword>
<keyword id="KW-0560">Oxidoreductase</keyword>
<keyword id="KW-0816">Tricarboxylic acid cycle</keyword>
<evidence type="ECO:0000255" key="1">
    <source>
        <dbReference type="HAMAP-Rule" id="MF_01517"/>
    </source>
</evidence>
<gene>
    <name evidence="1" type="primary">mdh</name>
    <name type="ordered locus">PXO_02545</name>
</gene>